<organism>
    <name type="scientific">Azoarcus sp. (strain BH72)</name>
    <dbReference type="NCBI Taxonomy" id="418699"/>
    <lineage>
        <taxon>Bacteria</taxon>
        <taxon>Pseudomonadati</taxon>
        <taxon>Pseudomonadota</taxon>
        <taxon>Betaproteobacteria</taxon>
        <taxon>Rhodocyclales</taxon>
        <taxon>Zoogloeaceae</taxon>
        <taxon>Azoarcus</taxon>
    </lineage>
</organism>
<keyword id="KW-0004">4Fe-4S</keyword>
<keyword id="KW-0997">Cell inner membrane</keyword>
<keyword id="KW-1003">Cell membrane</keyword>
<keyword id="KW-0408">Iron</keyword>
<keyword id="KW-0411">Iron-sulfur</keyword>
<keyword id="KW-0472">Membrane</keyword>
<keyword id="KW-0479">Metal-binding</keyword>
<keyword id="KW-0520">NAD</keyword>
<keyword id="KW-0874">Quinone</keyword>
<keyword id="KW-1185">Reference proteome</keyword>
<keyword id="KW-0677">Repeat</keyword>
<keyword id="KW-1278">Translocase</keyword>
<keyword id="KW-0830">Ubiquinone</keyword>
<accession>A1K5B6</accession>
<name>NUOI_AZOSB</name>
<comment type="function">
    <text evidence="1">NDH-1 shuttles electrons from NADH, via FMN and iron-sulfur (Fe-S) centers, to quinones in the respiratory chain. The immediate electron acceptor for the enzyme in this species is believed to be ubiquinone. Couples the redox reaction to proton translocation (for every two electrons transferred, four hydrogen ions are translocated across the cytoplasmic membrane), and thus conserves the redox energy in a proton gradient.</text>
</comment>
<comment type="catalytic activity">
    <reaction evidence="1">
        <text>a quinone + NADH + 5 H(+)(in) = a quinol + NAD(+) + 4 H(+)(out)</text>
        <dbReference type="Rhea" id="RHEA:57888"/>
        <dbReference type="ChEBI" id="CHEBI:15378"/>
        <dbReference type="ChEBI" id="CHEBI:24646"/>
        <dbReference type="ChEBI" id="CHEBI:57540"/>
        <dbReference type="ChEBI" id="CHEBI:57945"/>
        <dbReference type="ChEBI" id="CHEBI:132124"/>
    </reaction>
</comment>
<comment type="cofactor">
    <cofactor evidence="1">
        <name>[4Fe-4S] cluster</name>
        <dbReference type="ChEBI" id="CHEBI:49883"/>
    </cofactor>
    <text evidence="1">Binds 2 [4Fe-4S] clusters per subunit.</text>
</comment>
<comment type="subunit">
    <text evidence="1">NDH-1 is composed of 14 different subunits. Subunits NuoA, H, J, K, L, M, N constitute the membrane sector of the complex.</text>
</comment>
<comment type="subcellular location">
    <subcellularLocation>
        <location evidence="1">Cell inner membrane</location>
        <topology evidence="1">Peripheral membrane protein</topology>
    </subcellularLocation>
</comment>
<comment type="similarity">
    <text evidence="1">Belongs to the complex I 23 kDa subunit family.</text>
</comment>
<feature type="chain" id="PRO_0000298480" description="NADH-quinone oxidoreductase subunit I">
    <location>
        <begin position="1"/>
        <end position="161"/>
    </location>
</feature>
<feature type="domain" description="4Fe-4S ferredoxin-type 1" evidence="1">
    <location>
        <begin position="52"/>
        <end position="82"/>
    </location>
</feature>
<feature type="domain" description="4Fe-4S ferredoxin-type 2" evidence="1">
    <location>
        <begin position="92"/>
        <end position="121"/>
    </location>
</feature>
<feature type="binding site" evidence="1">
    <location>
        <position position="62"/>
    </location>
    <ligand>
        <name>[4Fe-4S] cluster</name>
        <dbReference type="ChEBI" id="CHEBI:49883"/>
        <label>1</label>
    </ligand>
</feature>
<feature type="binding site" evidence="1">
    <location>
        <position position="65"/>
    </location>
    <ligand>
        <name>[4Fe-4S] cluster</name>
        <dbReference type="ChEBI" id="CHEBI:49883"/>
        <label>1</label>
    </ligand>
</feature>
<feature type="binding site" evidence="1">
    <location>
        <position position="68"/>
    </location>
    <ligand>
        <name>[4Fe-4S] cluster</name>
        <dbReference type="ChEBI" id="CHEBI:49883"/>
        <label>1</label>
    </ligand>
</feature>
<feature type="binding site" evidence="1">
    <location>
        <position position="72"/>
    </location>
    <ligand>
        <name>[4Fe-4S] cluster</name>
        <dbReference type="ChEBI" id="CHEBI:49883"/>
        <label>2</label>
    </ligand>
</feature>
<feature type="binding site" evidence="1">
    <location>
        <position position="101"/>
    </location>
    <ligand>
        <name>[4Fe-4S] cluster</name>
        <dbReference type="ChEBI" id="CHEBI:49883"/>
        <label>2</label>
    </ligand>
</feature>
<feature type="binding site" evidence="1">
    <location>
        <position position="104"/>
    </location>
    <ligand>
        <name>[4Fe-4S] cluster</name>
        <dbReference type="ChEBI" id="CHEBI:49883"/>
        <label>2</label>
    </ligand>
</feature>
<feature type="binding site" evidence="1">
    <location>
        <position position="107"/>
    </location>
    <ligand>
        <name>[4Fe-4S] cluster</name>
        <dbReference type="ChEBI" id="CHEBI:49883"/>
        <label>2</label>
    </ligand>
</feature>
<feature type="binding site" evidence="1">
    <location>
        <position position="111"/>
    </location>
    <ligand>
        <name>[4Fe-4S] cluster</name>
        <dbReference type="ChEBI" id="CHEBI:49883"/>
        <label>1</label>
    </ligand>
</feature>
<reference key="1">
    <citation type="journal article" date="2006" name="Nat. Biotechnol.">
        <title>Complete genome of the mutualistic, N2-fixing grass endophyte Azoarcus sp. strain BH72.</title>
        <authorList>
            <person name="Krause A."/>
            <person name="Ramakumar A."/>
            <person name="Bartels D."/>
            <person name="Battistoni F."/>
            <person name="Bekel T."/>
            <person name="Boch J."/>
            <person name="Boehm M."/>
            <person name="Friedrich F."/>
            <person name="Hurek T."/>
            <person name="Krause L."/>
            <person name="Linke B."/>
            <person name="McHardy A.C."/>
            <person name="Sarkar A."/>
            <person name="Schneiker S."/>
            <person name="Syed A.A."/>
            <person name="Thauer R."/>
            <person name="Vorhoelter F.-J."/>
            <person name="Weidner S."/>
            <person name="Puehler A."/>
            <person name="Reinhold-Hurek B."/>
            <person name="Kaiser O."/>
            <person name="Goesmann A."/>
        </authorList>
    </citation>
    <scope>NUCLEOTIDE SEQUENCE [LARGE SCALE GENOMIC DNA]</scope>
    <source>
        <strain>BH72</strain>
    </source>
</reference>
<dbReference type="EC" id="7.1.1.-" evidence="1"/>
<dbReference type="EMBL" id="AM406670">
    <property type="protein sequence ID" value="CAL94021.1"/>
    <property type="molecule type" value="Genomic_DNA"/>
</dbReference>
<dbReference type="RefSeq" id="WP_011765137.1">
    <property type="nucleotide sequence ID" value="NC_008702.1"/>
</dbReference>
<dbReference type="SMR" id="A1K5B6"/>
<dbReference type="STRING" id="62928.azo1404"/>
<dbReference type="KEGG" id="aoa:dqs_1528"/>
<dbReference type="KEGG" id="azo:azo1404"/>
<dbReference type="eggNOG" id="COG1143">
    <property type="taxonomic scope" value="Bacteria"/>
</dbReference>
<dbReference type="HOGENOM" id="CLU_067218_5_1_4"/>
<dbReference type="OrthoDB" id="9808559at2"/>
<dbReference type="Proteomes" id="UP000002588">
    <property type="component" value="Chromosome"/>
</dbReference>
<dbReference type="GO" id="GO:0005886">
    <property type="term" value="C:plasma membrane"/>
    <property type="evidence" value="ECO:0007669"/>
    <property type="project" value="UniProtKB-SubCell"/>
</dbReference>
<dbReference type="GO" id="GO:0051539">
    <property type="term" value="F:4 iron, 4 sulfur cluster binding"/>
    <property type="evidence" value="ECO:0007669"/>
    <property type="project" value="UniProtKB-KW"/>
</dbReference>
<dbReference type="GO" id="GO:0005506">
    <property type="term" value="F:iron ion binding"/>
    <property type="evidence" value="ECO:0007669"/>
    <property type="project" value="UniProtKB-UniRule"/>
</dbReference>
<dbReference type="GO" id="GO:0050136">
    <property type="term" value="F:NADH:ubiquinone reductase (non-electrogenic) activity"/>
    <property type="evidence" value="ECO:0007669"/>
    <property type="project" value="UniProtKB-UniRule"/>
</dbReference>
<dbReference type="GO" id="GO:0048038">
    <property type="term" value="F:quinone binding"/>
    <property type="evidence" value="ECO:0007669"/>
    <property type="project" value="UniProtKB-KW"/>
</dbReference>
<dbReference type="GO" id="GO:0009060">
    <property type="term" value="P:aerobic respiration"/>
    <property type="evidence" value="ECO:0007669"/>
    <property type="project" value="TreeGrafter"/>
</dbReference>
<dbReference type="FunFam" id="3.30.70.3270:FF:000003">
    <property type="entry name" value="NADH-quinone oxidoreductase subunit I"/>
    <property type="match status" value="1"/>
</dbReference>
<dbReference type="Gene3D" id="3.30.70.3270">
    <property type="match status" value="1"/>
</dbReference>
<dbReference type="HAMAP" id="MF_01351">
    <property type="entry name" value="NDH1_NuoI"/>
    <property type="match status" value="1"/>
</dbReference>
<dbReference type="InterPro" id="IPR017896">
    <property type="entry name" value="4Fe4S_Fe-S-bd"/>
</dbReference>
<dbReference type="InterPro" id="IPR017900">
    <property type="entry name" value="4Fe4S_Fe_S_CS"/>
</dbReference>
<dbReference type="InterPro" id="IPR010226">
    <property type="entry name" value="NADH_quinone_OxRdtase_chainI"/>
</dbReference>
<dbReference type="NCBIfam" id="TIGR01971">
    <property type="entry name" value="NuoI"/>
    <property type="match status" value="1"/>
</dbReference>
<dbReference type="NCBIfam" id="NF004538">
    <property type="entry name" value="PRK05888.1-4"/>
    <property type="match status" value="1"/>
</dbReference>
<dbReference type="NCBIfam" id="NF004539">
    <property type="entry name" value="PRK05888.1-5"/>
    <property type="match status" value="1"/>
</dbReference>
<dbReference type="PANTHER" id="PTHR10849:SF20">
    <property type="entry name" value="NADH DEHYDROGENASE [UBIQUINONE] IRON-SULFUR PROTEIN 8, MITOCHONDRIAL"/>
    <property type="match status" value="1"/>
</dbReference>
<dbReference type="PANTHER" id="PTHR10849">
    <property type="entry name" value="NADH DEHYDROGENASE UBIQUINONE IRON-SULFUR PROTEIN 8, MITOCHONDRIAL"/>
    <property type="match status" value="1"/>
</dbReference>
<dbReference type="Pfam" id="PF12838">
    <property type="entry name" value="Fer4_7"/>
    <property type="match status" value="1"/>
</dbReference>
<dbReference type="SUPFAM" id="SSF54862">
    <property type="entry name" value="4Fe-4S ferredoxins"/>
    <property type="match status" value="1"/>
</dbReference>
<dbReference type="PROSITE" id="PS00198">
    <property type="entry name" value="4FE4S_FER_1"/>
    <property type="match status" value="2"/>
</dbReference>
<dbReference type="PROSITE" id="PS51379">
    <property type="entry name" value="4FE4S_FER_2"/>
    <property type="match status" value="2"/>
</dbReference>
<evidence type="ECO:0000255" key="1">
    <source>
        <dbReference type="HAMAP-Rule" id="MF_01351"/>
    </source>
</evidence>
<sequence length="161" mass="18508">MGAKDYIGSLFLKELVKGMALTGRHFFARKITVQFPEEKTPQSARFRGLHALRRYPNGEERCIACKLCEAICPAMAITIESEQREDGSRRTSRYDIDLTKCIFCGFCEEACPVDAVVETRVFEYHGEQRGDLYYTKQMLLAVGDRHEQQIAADREQEAKFR</sequence>
<protein>
    <recommendedName>
        <fullName evidence="1">NADH-quinone oxidoreductase subunit I</fullName>
        <ecNumber evidence="1">7.1.1.-</ecNumber>
    </recommendedName>
    <alternativeName>
        <fullName evidence="1">NADH dehydrogenase I subunit I</fullName>
    </alternativeName>
    <alternativeName>
        <fullName evidence="1">NDH-1 subunit I</fullName>
    </alternativeName>
</protein>
<proteinExistence type="inferred from homology"/>
<gene>
    <name evidence="1" type="primary">nuoI</name>
    <name type="ordered locus">azo1404</name>
</gene>